<evidence type="ECO:0000255" key="1">
    <source>
        <dbReference type="HAMAP-Rule" id="MF_00622"/>
    </source>
</evidence>
<keyword id="KW-0963">Cytoplasm</keyword>
<keyword id="KW-0271">Exosome</keyword>
<feature type="chain" id="PRO_1000130463" description="Exosome complex component Rrp42">
    <location>
        <begin position="1"/>
        <end position="272"/>
    </location>
</feature>
<name>RRP42_THEON</name>
<gene>
    <name evidence="1" type="primary">rrp42</name>
    <name type="ordered locus">TON_0031</name>
</gene>
<proteinExistence type="inferred from homology"/>
<protein>
    <recommendedName>
        <fullName evidence="1">Exosome complex component Rrp42</fullName>
    </recommendedName>
</protein>
<comment type="function">
    <text evidence="1">Non-catalytic component of the exosome, which is a complex involved in RNA degradation. Contributes to the structuring of the Rrp41 active site.</text>
</comment>
<comment type="subunit">
    <text evidence="1">Component of the archaeal exosome complex. Forms a hexameric ring-like arrangement composed of 3 Rrp41-Rrp42 heterodimers. The hexameric ring associates with a trimer of Rrp4 and/or Csl4 subunits.</text>
</comment>
<comment type="subcellular location">
    <subcellularLocation>
        <location evidence="1">Cytoplasm</location>
    </subcellularLocation>
</comment>
<comment type="similarity">
    <text evidence="1">Belongs to the RNase PH family. Rrp42 subfamily.</text>
</comment>
<dbReference type="EMBL" id="CP000855">
    <property type="protein sequence ID" value="ACJ15515.1"/>
    <property type="molecule type" value="Genomic_DNA"/>
</dbReference>
<dbReference type="SMR" id="B6YSE7"/>
<dbReference type="STRING" id="523850.TON_0031"/>
<dbReference type="KEGG" id="ton:TON_0031"/>
<dbReference type="PATRIC" id="fig|523850.10.peg.31"/>
<dbReference type="eggNOG" id="arCOG01574">
    <property type="taxonomic scope" value="Archaea"/>
</dbReference>
<dbReference type="HOGENOM" id="CLU_038194_0_0_2"/>
<dbReference type="Proteomes" id="UP000002727">
    <property type="component" value="Chromosome"/>
</dbReference>
<dbReference type="GO" id="GO:0000177">
    <property type="term" value="C:cytoplasmic exosome (RNase complex)"/>
    <property type="evidence" value="ECO:0007669"/>
    <property type="project" value="TreeGrafter"/>
</dbReference>
<dbReference type="GO" id="GO:0035925">
    <property type="term" value="F:mRNA 3'-UTR AU-rich region binding"/>
    <property type="evidence" value="ECO:0007669"/>
    <property type="project" value="TreeGrafter"/>
</dbReference>
<dbReference type="GO" id="GO:0016075">
    <property type="term" value="P:rRNA catabolic process"/>
    <property type="evidence" value="ECO:0007669"/>
    <property type="project" value="TreeGrafter"/>
</dbReference>
<dbReference type="CDD" id="cd11365">
    <property type="entry name" value="RNase_PH_archRRP42"/>
    <property type="match status" value="1"/>
</dbReference>
<dbReference type="FunFam" id="3.30.230.70:FF:000017">
    <property type="entry name" value="Exosome complex component Rrp42"/>
    <property type="match status" value="1"/>
</dbReference>
<dbReference type="Gene3D" id="3.30.230.70">
    <property type="entry name" value="GHMP Kinase, N-terminal domain"/>
    <property type="match status" value="1"/>
</dbReference>
<dbReference type="HAMAP" id="MF_00622">
    <property type="entry name" value="Exosome_Rrp42"/>
    <property type="match status" value="1"/>
</dbReference>
<dbReference type="InterPro" id="IPR001247">
    <property type="entry name" value="ExoRNase_PH_dom1"/>
</dbReference>
<dbReference type="InterPro" id="IPR015847">
    <property type="entry name" value="ExoRNase_PH_dom2"/>
</dbReference>
<dbReference type="InterPro" id="IPR036345">
    <property type="entry name" value="ExoRNase_PH_dom2_sf"/>
</dbReference>
<dbReference type="InterPro" id="IPR050590">
    <property type="entry name" value="Exosome_comp_Rrp42_subfam"/>
</dbReference>
<dbReference type="InterPro" id="IPR027408">
    <property type="entry name" value="PNPase/RNase_PH_dom_sf"/>
</dbReference>
<dbReference type="InterPro" id="IPR020568">
    <property type="entry name" value="Ribosomal_Su5_D2-typ_SF"/>
</dbReference>
<dbReference type="InterPro" id="IPR020869">
    <property type="entry name" value="Rrp42_archaea"/>
</dbReference>
<dbReference type="NCBIfam" id="NF003282">
    <property type="entry name" value="PRK04282.1-1"/>
    <property type="match status" value="1"/>
</dbReference>
<dbReference type="PANTHER" id="PTHR11097:SF8">
    <property type="entry name" value="EXOSOME COMPLEX COMPONENT RRP42"/>
    <property type="match status" value="1"/>
</dbReference>
<dbReference type="PANTHER" id="PTHR11097">
    <property type="entry name" value="EXOSOME COMPLEX EXONUCLEASE RIBOSOMAL RNA PROCESSING PROTEIN"/>
    <property type="match status" value="1"/>
</dbReference>
<dbReference type="Pfam" id="PF01138">
    <property type="entry name" value="RNase_PH"/>
    <property type="match status" value="1"/>
</dbReference>
<dbReference type="Pfam" id="PF03725">
    <property type="entry name" value="RNase_PH_C"/>
    <property type="match status" value="1"/>
</dbReference>
<dbReference type="SUPFAM" id="SSF55666">
    <property type="entry name" value="Ribonuclease PH domain 2-like"/>
    <property type="match status" value="1"/>
</dbReference>
<dbReference type="SUPFAM" id="SSF54211">
    <property type="entry name" value="Ribosomal protein S5 domain 2-like"/>
    <property type="match status" value="1"/>
</dbReference>
<sequence length="272" mass="29535">MSEMEVMASIMRDHILALLKEGKRVDGRSLEDYRDLEIKINVIEKAEGSAWVKLGNTQVLVGIKVDMGEPFPDLPEKGVITTNVELVPLASPSFEPGPPDERAIELARVVDRGIRESGAVELEKLVIVPGKLVRVVFIDVHVLDHDGNLLDASGIGAIAALMSAKMPKVVYDEESGEVQILDEYEPLPVSKMPIPVTIAKVGGNLLVDPNLDEELVMDGRITITTDENGMISSVQKSEGGSFKLEEVMYAIDLALTKAAEIREKVLEAVGAE</sequence>
<organism>
    <name type="scientific">Thermococcus onnurineus (strain NA1)</name>
    <dbReference type="NCBI Taxonomy" id="523850"/>
    <lineage>
        <taxon>Archaea</taxon>
        <taxon>Methanobacteriati</taxon>
        <taxon>Methanobacteriota</taxon>
        <taxon>Thermococci</taxon>
        <taxon>Thermococcales</taxon>
        <taxon>Thermococcaceae</taxon>
        <taxon>Thermococcus</taxon>
    </lineage>
</organism>
<accession>B6YSE7</accession>
<reference key="1">
    <citation type="journal article" date="2008" name="J. Bacteriol.">
        <title>The complete genome sequence of Thermococcus onnurineus NA1 reveals a mixed heterotrophic and carboxydotrophic metabolism.</title>
        <authorList>
            <person name="Lee H.S."/>
            <person name="Kang S.G."/>
            <person name="Bae S.S."/>
            <person name="Lim J.K."/>
            <person name="Cho Y."/>
            <person name="Kim Y.J."/>
            <person name="Jeon J.H."/>
            <person name="Cha S.-S."/>
            <person name="Kwon K.K."/>
            <person name="Kim H.-T."/>
            <person name="Park C.-J."/>
            <person name="Lee H.-W."/>
            <person name="Kim S.I."/>
            <person name="Chun J."/>
            <person name="Colwell R.R."/>
            <person name="Kim S.-J."/>
            <person name="Lee J.-H."/>
        </authorList>
    </citation>
    <scope>NUCLEOTIDE SEQUENCE [LARGE SCALE GENOMIC DNA]</scope>
    <source>
        <strain>NA1</strain>
    </source>
</reference>